<organism>
    <name type="scientific">Hadronyche infensa</name>
    <name type="common">Fraser island funnel-web spider</name>
    <name type="synonym">Atrax infensus</name>
    <dbReference type="NCBI Taxonomy" id="153481"/>
    <lineage>
        <taxon>Eukaryota</taxon>
        <taxon>Metazoa</taxon>
        <taxon>Ecdysozoa</taxon>
        <taxon>Arthropoda</taxon>
        <taxon>Chelicerata</taxon>
        <taxon>Arachnida</taxon>
        <taxon>Araneae</taxon>
        <taxon>Mygalomorphae</taxon>
        <taxon>Hexathelidae</taxon>
        <taxon>Hadronyche</taxon>
    </lineage>
</organism>
<proteinExistence type="inferred from homology"/>
<keyword id="KW-1015">Disulfide bond</keyword>
<keyword id="KW-0872">Ion channel impairing toxin</keyword>
<keyword id="KW-0646">Protease inhibitor</keyword>
<keyword id="KW-0964">Secreted</keyword>
<keyword id="KW-0732">Signal</keyword>
<keyword id="KW-0789">Thiol protease inhibitor</keyword>
<keyword id="KW-0800">Toxin</keyword>
<name>T71A_HADIN</name>
<reference key="1">
    <citation type="journal article" date="2020" name="Proc. Natl. Acad. Sci. U.S.A.">
        <title>Structural venomics reveals evolution of a complex venom by duplication and diversification of an ancient peptide-encoding gene.</title>
        <authorList>
            <person name="Pineda S.S."/>
            <person name="Chin Y.K."/>
            <person name="Undheim E.A.B."/>
            <person name="Senff S."/>
            <person name="Mobli M."/>
            <person name="Dauly C."/>
            <person name="Escoubas P."/>
            <person name="Nicholson G.M."/>
            <person name="Kaas Q."/>
            <person name="Guo S."/>
            <person name="Herzig V."/>
            <person name="Mattick J.S."/>
            <person name="King G.F."/>
        </authorList>
    </citation>
    <scope>NUCLEOTIDE SEQUENCE [MRNA]</scope>
    <source>
        <tissue>Venom gland</tissue>
    </source>
</reference>
<sequence length="105" mass="11672">MKTILLFLGVCAVGASMMTGGWTNKDVNDEEVKKLAIFASTKFNEKSNSLVFEKMCKILEAKSQLVAGMLYDITFEASPTVCKKNDKNYVPIYQCPLLPCAPRKI</sequence>
<comment type="function">
    <text evidence="1">Inhibits various C1 cysteine proteases. This protein has no toxic activity and its function in the venom is unknown. It may play a role as a housekeeping or regulatory protein (By similarity).</text>
</comment>
<comment type="subcellular location">
    <subcellularLocation>
        <location evidence="5">Secreted</location>
    </subcellularLocation>
</comment>
<comment type="tissue specificity">
    <text evidence="5">Expressed by the venom gland.</text>
</comment>
<comment type="PTM">
    <text evidence="4">Contains 2 disulfide bonds.</text>
</comment>
<comment type="similarity">
    <text evidence="4">Belongs to the cystatin family.</text>
</comment>
<protein>
    <recommendedName>
        <fullName evidence="3">U7-hexatoxin-Hi1a</fullName>
        <shortName evidence="3">U7-HXTX-Hi1a</shortName>
    </recommendedName>
    <alternativeName>
        <fullName evidence="3">Cystatin-like protein</fullName>
    </alternativeName>
    <alternativeName>
        <fullName evidence="3">SF11 peptide</fullName>
    </alternativeName>
</protein>
<evidence type="ECO:0000250" key="1">
    <source>
        <dbReference type="UniProtKB" id="E3P6N3"/>
    </source>
</evidence>
<evidence type="ECO:0000255" key="2"/>
<evidence type="ECO:0000303" key="3">
    <source>
    </source>
</evidence>
<evidence type="ECO:0000305" key="4"/>
<evidence type="ECO:0000305" key="5">
    <source>
    </source>
</evidence>
<feature type="signal peptide" evidence="2">
    <location>
        <begin position="1"/>
        <end position="23"/>
    </location>
</feature>
<feature type="chain" id="PRO_0000459671" description="U7-hexatoxin-Hi1a" evidence="2">
    <location>
        <begin position="24"/>
        <end position="105"/>
    </location>
</feature>
<accession>P0DXA0</accession>
<dbReference type="SMR" id="P0DXA0"/>
<dbReference type="GO" id="GO:0005737">
    <property type="term" value="C:cytoplasm"/>
    <property type="evidence" value="ECO:0007669"/>
    <property type="project" value="TreeGrafter"/>
</dbReference>
<dbReference type="GO" id="GO:0005615">
    <property type="term" value="C:extracellular space"/>
    <property type="evidence" value="ECO:0007669"/>
    <property type="project" value="TreeGrafter"/>
</dbReference>
<dbReference type="GO" id="GO:0031982">
    <property type="term" value="C:vesicle"/>
    <property type="evidence" value="ECO:0007669"/>
    <property type="project" value="TreeGrafter"/>
</dbReference>
<dbReference type="GO" id="GO:0004869">
    <property type="term" value="F:cysteine-type endopeptidase inhibitor activity"/>
    <property type="evidence" value="ECO:0007669"/>
    <property type="project" value="UniProtKB-KW"/>
</dbReference>
<dbReference type="GO" id="GO:0099106">
    <property type="term" value="F:ion channel regulator activity"/>
    <property type="evidence" value="ECO:0007669"/>
    <property type="project" value="UniProtKB-KW"/>
</dbReference>
<dbReference type="GO" id="GO:0090729">
    <property type="term" value="F:toxin activity"/>
    <property type="evidence" value="ECO:0007669"/>
    <property type="project" value="UniProtKB-KW"/>
</dbReference>
<dbReference type="CDD" id="cd00042">
    <property type="entry name" value="CY"/>
    <property type="match status" value="1"/>
</dbReference>
<dbReference type="Gene3D" id="3.10.450.10">
    <property type="match status" value="1"/>
</dbReference>
<dbReference type="InterPro" id="IPR000010">
    <property type="entry name" value="Cystatin_dom"/>
</dbReference>
<dbReference type="InterPro" id="IPR046350">
    <property type="entry name" value="Cystatin_sf"/>
</dbReference>
<dbReference type="InterPro" id="IPR018073">
    <property type="entry name" value="Prot_inh_cystat_CS"/>
</dbReference>
<dbReference type="PANTHER" id="PTHR46186">
    <property type="entry name" value="CYSTATIN"/>
    <property type="match status" value="1"/>
</dbReference>
<dbReference type="PANTHER" id="PTHR46186:SF2">
    <property type="entry name" value="CYSTATIN"/>
    <property type="match status" value="1"/>
</dbReference>
<dbReference type="Pfam" id="PF00031">
    <property type="entry name" value="Cystatin"/>
    <property type="match status" value="1"/>
</dbReference>
<dbReference type="SMART" id="SM00043">
    <property type="entry name" value="CY"/>
    <property type="match status" value="1"/>
</dbReference>
<dbReference type="SUPFAM" id="SSF54403">
    <property type="entry name" value="Cystatin/monellin"/>
    <property type="match status" value="1"/>
</dbReference>
<dbReference type="PROSITE" id="PS00287">
    <property type="entry name" value="CYSTATIN"/>
    <property type="match status" value="1"/>
</dbReference>